<dbReference type="EC" id="2.7.11.1"/>
<dbReference type="EMBL" id="D88435">
    <property type="protein sequence ID" value="BAA22623.1"/>
    <property type="molecule type" value="mRNA"/>
</dbReference>
<dbReference type="EMBL" id="BC000816">
    <property type="protein sequence ID" value="AAH00816.1"/>
    <property type="molecule type" value="mRNA"/>
</dbReference>
<dbReference type="EMBL" id="BC008668">
    <property type="protein sequence ID" value="AAH08668.1"/>
    <property type="molecule type" value="mRNA"/>
</dbReference>
<dbReference type="EMBL" id="BC085005">
    <property type="protein sequence ID" value="AAH85005.1"/>
    <property type="molecule type" value="mRNA"/>
</dbReference>
<dbReference type="CCDS" id="CCDS3340.1">
    <molecule id="O14976-1"/>
</dbReference>
<dbReference type="CCDS" id="CCDS82902.1">
    <molecule id="O14976-2"/>
</dbReference>
<dbReference type="RefSeq" id="NP_001305063.1">
    <molecule id="O14976-2"/>
    <property type="nucleotide sequence ID" value="NM_001318134.2"/>
</dbReference>
<dbReference type="RefSeq" id="NP_005246.2">
    <molecule id="O14976-1"/>
    <property type="nucleotide sequence ID" value="NM_005255.4"/>
</dbReference>
<dbReference type="PDB" id="4C57">
    <property type="method" value="X-ray"/>
    <property type="resolution" value="2.55 A"/>
    <property type="chains" value="A/B=14-351"/>
</dbReference>
<dbReference type="PDB" id="4C58">
    <property type="method" value="X-ray"/>
    <property type="resolution" value="2.16 A"/>
    <property type="chains" value="A=14-351"/>
</dbReference>
<dbReference type="PDB" id="4C59">
    <property type="method" value="X-ray"/>
    <property type="resolution" value="2.80 A"/>
    <property type="chains" value="A=14-351"/>
</dbReference>
<dbReference type="PDB" id="4O38">
    <property type="method" value="X-ray"/>
    <property type="resolution" value="2.10 A"/>
    <property type="chains" value="A/B=12-347"/>
</dbReference>
<dbReference type="PDB" id="4Y8D">
    <property type="method" value="X-ray"/>
    <property type="resolution" value="2.10 A"/>
    <property type="chains" value="A/B=14-351"/>
</dbReference>
<dbReference type="PDB" id="5Y7Z">
    <property type="method" value="X-ray"/>
    <property type="resolution" value="2.80 A"/>
    <property type="chains" value="A/B=25-335"/>
</dbReference>
<dbReference type="PDB" id="5Y80">
    <property type="method" value="X-ray"/>
    <property type="resolution" value="2.50 A"/>
    <property type="chains" value="A=25-335"/>
</dbReference>
<dbReference type="PDBsum" id="4C57"/>
<dbReference type="PDBsum" id="4C58"/>
<dbReference type="PDBsum" id="4C59"/>
<dbReference type="PDBsum" id="4O38"/>
<dbReference type="PDBsum" id="4Y8D"/>
<dbReference type="PDBsum" id="5Y7Z"/>
<dbReference type="PDBsum" id="5Y80"/>
<dbReference type="SMR" id="O14976"/>
<dbReference type="BioGRID" id="108853">
    <property type="interactions" value="209"/>
</dbReference>
<dbReference type="CORUM" id="O14976"/>
<dbReference type="FunCoup" id="O14976">
    <property type="interactions" value="3845"/>
</dbReference>
<dbReference type="IntAct" id="O14976">
    <property type="interactions" value="139"/>
</dbReference>
<dbReference type="MINT" id="O14976"/>
<dbReference type="STRING" id="9606.ENSP00000314499"/>
<dbReference type="BindingDB" id="O14976"/>
<dbReference type="ChEMBL" id="CHEMBL4355"/>
<dbReference type="DrugBank" id="DB12010">
    <property type="generic name" value="Fostamatinib"/>
</dbReference>
<dbReference type="DrugCentral" id="O14976"/>
<dbReference type="GuidetoPHARMACOLOGY" id="2027"/>
<dbReference type="DEPOD" id="GAK"/>
<dbReference type="GlyCosmos" id="O14976">
    <property type="glycosylation" value="1 site, 1 glycan"/>
</dbReference>
<dbReference type="GlyGen" id="O14976">
    <property type="glycosylation" value="4 sites, 3 N-linked glycans (2 sites), 1 O-linked glycan (1 site)"/>
</dbReference>
<dbReference type="iPTMnet" id="O14976"/>
<dbReference type="PhosphoSitePlus" id="O14976"/>
<dbReference type="SwissPalm" id="O14976"/>
<dbReference type="BioMuta" id="GAK"/>
<dbReference type="CPTAC" id="CPTAC-3085"/>
<dbReference type="CPTAC" id="CPTAC-3086"/>
<dbReference type="jPOST" id="O14976"/>
<dbReference type="MassIVE" id="O14976"/>
<dbReference type="PaxDb" id="9606-ENSP00000314499"/>
<dbReference type="PeptideAtlas" id="O14976"/>
<dbReference type="ProteomicsDB" id="48350">
    <molecule id="O14976-1"/>
</dbReference>
<dbReference type="Pumba" id="O14976"/>
<dbReference type="ABCD" id="O14976">
    <property type="antibodies" value="2 sequenced antibodies"/>
</dbReference>
<dbReference type="Antibodypedia" id="22165">
    <property type="antibodies" value="326 antibodies from 34 providers"/>
</dbReference>
<dbReference type="DNASU" id="2580"/>
<dbReference type="Ensembl" id="ENST00000314167.9">
    <molecule id="O14976-1"/>
    <property type="protein sequence ID" value="ENSP00000314499.4"/>
    <property type="gene ID" value="ENSG00000178950.18"/>
</dbReference>
<dbReference type="Ensembl" id="ENST00000511163.5">
    <molecule id="O14976-2"/>
    <property type="protein sequence ID" value="ENSP00000421361.1"/>
    <property type="gene ID" value="ENSG00000178950.18"/>
</dbReference>
<dbReference type="GeneID" id="2580"/>
<dbReference type="KEGG" id="hsa:2580"/>
<dbReference type="MANE-Select" id="ENST00000314167.9">
    <property type="protein sequence ID" value="ENSP00000314499.4"/>
    <property type="RefSeq nucleotide sequence ID" value="NM_005255.4"/>
    <property type="RefSeq protein sequence ID" value="NP_005246.2"/>
</dbReference>
<dbReference type="UCSC" id="uc003gbm.6">
    <molecule id="O14976-1"/>
    <property type="organism name" value="human"/>
</dbReference>
<dbReference type="AGR" id="HGNC:4113"/>
<dbReference type="CTD" id="2580"/>
<dbReference type="DisGeNET" id="2580"/>
<dbReference type="GeneCards" id="GAK"/>
<dbReference type="HGNC" id="HGNC:4113">
    <property type="gene designation" value="GAK"/>
</dbReference>
<dbReference type="HPA" id="ENSG00000178950">
    <property type="expression patterns" value="Low tissue specificity"/>
</dbReference>
<dbReference type="MIM" id="602052">
    <property type="type" value="gene"/>
</dbReference>
<dbReference type="neXtProt" id="NX_O14976"/>
<dbReference type="OpenTargets" id="ENSG00000178950"/>
<dbReference type="PharmGKB" id="PA28528"/>
<dbReference type="VEuPathDB" id="HostDB:ENSG00000178950"/>
<dbReference type="eggNOG" id="KOG0431">
    <property type="taxonomic scope" value="Eukaryota"/>
</dbReference>
<dbReference type="eggNOG" id="KOG1989">
    <property type="taxonomic scope" value="Eukaryota"/>
</dbReference>
<dbReference type="eggNOG" id="KOG2283">
    <property type="taxonomic scope" value="Eukaryota"/>
</dbReference>
<dbReference type="GeneTree" id="ENSGT00940000159527"/>
<dbReference type="HOGENOM" id="CLU_007537_0_0_1"/>
<dbReference type="InParanoid" id="O14976"/>
<dbReference type="OMA" id="HYKNTNL"/>
<dbReference type="OrthoDB" id="1717591at2759"/>
<dbReference type="PAN-GO" id="O14976">
    <property type="GO annotations" value="6 GO annotations based on evolutionary models"/>
</dbReference>
<dbReference type="PhylomeDB" id="O14976"/>
<dbReference type="TreeFam" id="TF105165"/>
<dbReference type="PathwayCommons" id="O14976"/>
<dbReference type="Reactome" id="R-HSA-432722">
    <property type="pathway name" value="Golgi Associated Vesicle Biogenesis"/>
</dbReference>
<dbReference type="Reactome" id="R-HSA-8856828">
    <property type="pathway name" value="Clathrin-mediated endocytosis"/>
</dbReference>
<dbReference type="SignaLink" id="O14976"/>
<dbReference type="SIGNOR" id="O14976"/>
<dbReference type="BioGRID-ORCS" id="2580">
    <property type="hits" value="454 hits in 1196 CRISPR screens"/>
</dbReference>
<dbReference type="CD-CODE" id="FB4E32DD">
    <property type="entry name" value="Presynaptic clusters and postsynaptic densities"/>
</dbReference>
<dbReference type="ChiTaRS" id="GAK">
    <property type="organism name" value="human"/>
</dbReference>
<dbReference type="EvolutionaryTrace" id="O14976"/>
<dbReference type="GeneWiki" id="GAK_(protein)"/>
<dbReference type="GenomeRNAi" id="2580"/>
<dbReference type="Pharos" id="O14976">
    <property type="development level" value="Tchem"/>
</dbReference>
<dbReference type="PRO" id="PR:O14976"/>
<dbReference type="Proteomes" id="UP000005640">
    <property type="component" value="Chromosome 4"/>
</dbReference>
<dbReference type="RNAct" id="O14976">
    <property type="molecule type" value="protein"/>
</dbReference>
<dbReference type="Bgee" id="ENSG00000178950">
    <property type="expression patterns" value="Expressed in pancreatic ductal cell and 206 other cell types or tissues"/>
</dbReference>
<dbReference type="ExpressionAtlas" id="O14976">
    <property type="expression patterns" value="baseline and differential"/>
</dbReference>
<dbReference type="GO" id="GO:0030136">
    <property type="term" value="C:clathrin-coated vesicle"/>
    <property type="evidence" value="ECO:0000314"/>
    <property type="project" value="UniProtKB"/>
</dbReference>
<dbReference type="GO" id="GO:0005829">
    <property type="term" value="C:cytosol"/>
    <property type="evidence" value="ECO:0000304"/>
    <property type="project" value="Reactome"/>
</dbReference>
<dbReference type="GO" id="GO:0005925">
    <property type="term" value="C:focal adhesion"/>
    <property type="evidence" value="ECO:0007669"/>
    <property type="project" value="UniProtKB-SubCell"/>
</dbReference>
<dbReference type="GO" id="GO:0005794">
    <property type="term" value="C:Golgi apparatus"/>
    <property type="evidence" value="ECO:0000314"/>
    <property type="project" value="ParkinsonsUK-UCL"/>
</dbReference>
<dbReference type="GO" id="GO:0043231">
    <property type="term" value="C:intracellular membrane-bounded organelle"/>
    <property type="evidence" value="ECO:0000314"/>
    <property type="project" value="HPA"/>
</dbReference>
<dbReference type="GO" id="GO:0016020">
    <property type="term" value="C:membrane"/>
    <property type="evidence" value="ECO:0007005"/>
    <property type="project" value="UniProtKB"/>
</dbReference>
<dbReference type="GO" id="GO:0048471">
    <property type="term" value="C:perinuclear region of cytoplasm"/>
    <property type="evidence" value="ECO:0007669"/>
    <property type="project" value="UniProtKB-SubCell"/>
</dbReference>
<dbReference type="GO" id="GO:0098793">
    <property type="term" value="C:presynapse"/>
    <property type="evidence" value="ECO:0007669"/>
    <property type="project" value="GOC"/>
</dbReference>
<dbReference type="GO" id="GO:0031982">
    <property type="term" value="C:vesicle"/>
    <property type="evidence" value="ECO:0000314"/>
    <property type="project" value="ParkinsonsUK-UCL"/>
</dbReference>
<dbReference type="GO" id="GO:0005524">
    <property type="term" value="F:ATP binding"/>
    <property type="evidence" value="ECO:0007669"/>
    <property type="project" value="UniProtKB-KW"/>
</dbReference>
<dbReference type="GO" id="GO:0030276">
    <property type="term" value="F:clathrin binding"/>
    <property type="evidence" value="ECO:0000318"/>
    <property type="project" value="GO_Central"/>
</dbReference>
<dbReference type="GO" id="GO:0030332">
    <property type="term" value="F:cyclin binding"/>
    <property type="evidence" value="ECO:0000250"/>
    <property type="project" value="ParkinsonsUK-UCL"/>
</dbReference>
<dbReference type="GO" id="GO:0106310">
    <property type="term" value="F:protein serine kinase activity"/>
    <property type="evidence" value="ECO:0007669"/>
    <property type="project" value="RHEA"/>
</dbReference>
<dbReference type="GO" id="GO:0004674">
    <property type="term" value="F:protein serine/threonine kinase activity"/>
    <property type="evidence" value="ECO:0000304"/>
    <property type="project" value="ProtInc"/>
</dbReference>
<dbReference type="GO" id="GO:0051087">
    <property type="term" value="F:protein-folding chaperone binding"/>
    <property type="evidence" value="ECO:0000304"/>
    <property type="project" value="BHF-UCL"/>
</dbReference>
<dbReference type="GO" id="GO:0051085">
    <property type="term" value="P:chaperone cofactor-dependent protein refolding"/>
    <property type="evidence" value="ECO:0000304"/>
    <property type="project" value="BHF-UCL"/>
</dbReference>
<dbReference type="GO" id="GO:0048268">
    <property type="term" value="P:clathrin coat assembly"/>
    <property type="evidence" value="ECO:0000315"/>
    <property type="project" value="ParkinsonsUK-UCL"/>
</dbReference>
<dbReference type="GO" id="GO:0072318">
    <property type="term" value="P:clathrin coat disassembly"/>
    <property type="evidence" value="ECO:0000315"/>
    <property type="project" value="ParkinsonsUK-UCL"/>
</dbReference>
<dbReference type="GO" id="GO:0072583">
    <property type="term" value="P:clathrin-dependent endocytosis"/>
    <property type="evidence" value="ECO:0000315"/>
    <property type="project" value="UniProtKB"/>
</dbReference>
<dbReference type="GO" id="GO:0007029">
    <property type="term" value="P:endoplasmic reticulum organization"/>
    <property type="evidence" value="ECO:0000250"/>
    <property type="project" value="ParkinsonsUK-UCL"/>
</dbReference>
<dbReference type="GO" id="GO:0007030">
    <property type="term" value="P:Golgi organization"/>
    <property type="evidence" value="ECO:0000315"/>
    <property type="project" value="ParkinsonsUK-UCL"/>
</dbReference>
<dbReference type="GO" id="GO:0090160">
    <property type="term" value="P:Golgi to lysosome transport"/>
    <property type="evidence" value="ECO:0000315"/>
    <property type="project" value="ParkinsonsUK-UCL"/>
</dbReference>
<dbReference type="GO" id="GO:0046907">
    <property type="term" value="P:intracellular transport"/>
    <property type="evidence" value="ECO:0000315"/>
    <property type="project" value="UniProtKB"/>
</dbReference>
<dbReference type="GO" id="GO:0010977">
    <property type="term" value="P:negative regulation of neuron projection development"/>
    <property type="evidence" value="ECO:0000314"/>
    <property type="project" value="ParkinsonsUK-UCL"/>
</dbReference>
<dbReference type="GO" id="GO:0034067">
    <property type="term" value="P:protein localization to Golgi apparatus"/>
    <property type="evidence" value="ECO:0000315"/>
    <property type="project" value="ParkinsonsUK-UCL"/>
</dbReference>
<dbReference type="GO" id="GO:0072659">
    <property type="term" value="P:protein localization to plasma membrane"/>
    <property type="evidence" value="ECO:0000315"/>
    <property type="project" value="ParkinsonsUK-UCL"/>
</dbReference>
<dbReference type="GO" id="GO:0006898">
    <property type="term" value="P:receptor-mediated endocytosis"/>
    <property type="evidence" value="ECO:0000315"/>
    <property type="project" value="ParkinsonsUK-UCL"/>
</dbReference>
<dbReference type="GO" id="GO:1905443">
    <property type="term" value="P:regulation of clathrin coat assembly"/>
    <property type="evidence" value="ECO:0000315"/>
    <property type="project" value="UniProtKB"/>
</dbReference>
<dbReference type="GO" id="GO:0016191">
    <property type="term" value="P:synaptic vesicle uncoating"/>
    <property type="evidence" value="ECO:0000250"/>
    <property type="project" value="BHF-UCL"/>
</dbReference>
<dbReference type="CDD" id="cd06257">
    <property type="entry name" value="DnaJ"/>
    <property type="match status" value="1"/>
</dbReference>
<dbReference type="CDD" id="cd14564">
    <property type="entry name" value="PTP_GAK"/>
    <property type="match status" value="1"/>
</dbReference>
<dbReference type="CDD" id="cd14036">
    <property type="entry name" value="STKc_GAK"/>
    <property type="match status" value="1"/>
</dbReference>
<dbReference type="FunFam" id="1.10.510.10:FF:000228">
    <property type="entry name" value="cyclin-G-associated kinase isoform X1"/>
    <property type="match status" value="1"/>
</dbReference>
<dbReference type="FunFam" id="2.60.40.1110:FF:000001">
    <property type="entry name" value="cyclin-G-associated kinase isoform X2"/>
    <property type="match status" value="1"/>
</dbReference>
<dbReference type="FunFam" id="1.10.287.110:FF:000002">
    <property type="entry name" value="putative tyrosine-protein phosphatase auxilin isoform X2"/>
    <property type="match status" value="1"/>
</dbReference>
<dbReference type="FunFam" id="3.90.190.10:FF:000008">
    <property type="entry name" value="putative tyrosine-protein phosphatase auxilin isoform X2"/>
    <property type="match status" value="1"/>
</dbReference>
<dbReference type="Gene3D" id="2.60.40.1110">
    <property type="match status" value="1"/>
</dbReference>
<dbReference type="Gene3D" id="1.10.287.110">
    <property type="entry name" value="DnaJ domain"/>
    <property type="match status" value="1"/>
</dbReference>
<dbReference type="Gene3D" id="3.90.190.10">
    <property type="entry name" value="Protein tyrosine phosphatase superfamily"/>
    <property type="match status" value="1"/>
</dbReference>
<dbReference type="Gene3D" id="1.10.510.10">
    <property type="entry name" value="Transferase(Phosphotransferase) domain 1"/>
    <property type="match status" value="1"/>
</dbReference>
<dbReference type="InterPro" id="IPR035892">
    <property type="entry name" value="C2_domain_sf"/>
</dbReference>
<dbReference type="InterPro" id="IPR001623">
    <property type="entry name" value="DnaJ_domain"/>
</dbReference>
<dbReference type="InterPro" id="IPR036869">
    <property type="entry name" value="J_dom_sf"/>
</dbReference>
<dbReference type="InterPro" id="IPR011009">
    <property type="entry name" value="Kinase-like_dom_sf"/>
</dbReference>
<dbReference type="InterPro" id="IPR029021">
    <property type="entry name" value="Prot-tyrosine_phosphatase-like"/>
</dbReference>
<dbReference type="InterPro" id="IPR000719">
    <property type="entry name" value="Prot_kinase_dom"/>
</dbReference>
<dbReference type="InterPro" id="IPR008271">
    <property type="entry name" value="Ser/Thr_kinase_AS"/>
</dbReference>
<dbReference type="InterPro" id="IPR014020">
    <property type="entry name" value="Tensin_C2-dom"/>
</dbReference>
<dbReference type="InterPro" id="IPR029023">
    <property type="entry name" value="Tensin_phosphatase"/>
</dbReference>
<dbReference type="PANTHER" id="PTHR23172">
    <property type="entry name" value="AUXILIN/CYCLIN G-ASSOCIATED KINASE-RELATED"/>
    <property type="match status" value="1"/>
</dbReference>
<dbReference type="PANTHER" id="PTHR23172:SF34">
    <property type="entry name" value="CYCLIN-G-ASSOCIATED KINASE"/>
    <property type="match status" value="1"/>
</dbReference>
<dbReference type="Pfam" id="PF00069">
    <property type="entry name" value="Pkinase"/>
    <property type="match status" value="1"/>
</dbReference>
<dbReference type="Pfam" id="PF10409">
    <property type="entry name" value="PTEN_C2"/>
    <property type="match status" value="1"/>
</dbReference>
<dbReference type="SMART" id="SM00271">
    <property type="entry name" value="DnaJ"/>
    <property type="match status" value="1"/>
</dbReference>
<dbReference type="SMART" id="SM01326">
    <property type="entry name" value="PTEN_C2"/>
    <property type="match status" value="1"/>
</dbReference>
<dbReference type="SMART" id="SM00220">
    <property type="entry name" value="S_TKc"/>
    <property type="match status" value="1"/>
</dbReference>
<dbReference type="SUPFAM" id="SSF52799">
    <property type="entry name" value="(Phosphotyrosine protein) phosphatases II"/>
    <property type="match status" value="1"/>
</dbReference>
<dbReference type="SUPFAM" id="SSF49562">
    <property type="entry name" value="C2 domain (Calcium/lipid-binding domain, CaLB)"/>
    <property type="match status" value="1"/>
</dbReference>
<dbReference type="SUPFAM" id="SSF46565">
    <property type="entry name" value="Chaperone J-domain"/>
    <property type="match status" value="1"/>
</dbReference>
<dbReference type="SUPFAM" id="SSF56112">
    <property type="entry name" value="Protein kinase-like (PK-like)"/>
    <property type="match status" value="1"/>
</dbReference>
<dbReference type="PROSITE" id="PS51182">
    <property type="entry name" value="C2_TENSIN"/>
    <property type="match status" value="1"/>
</dbReference>
<dbReference type="PROSITE" id="PS50076">
    <property type="entry name" value="DNAJ_2"/>
    <property type="match status" value="1"/>
</dbReference>
<dbReference type="PROSITE" id="PS51181">
    <property type="entry name" value="PPASE_TENSIN"/>
    <property type="match status" value="1"/>
</dbReference>
<dbReference type="PROSITE" id="PS50011">
    <property type="entry name" value="PROTEIN_KINASE_DOM"/>
    <property type="match status" value="1"/>
</dbReference>
<dbReference type="PROSITE" id="PS00108">
    <property type="entry name" value="PROTEIN_KINASE_ST"/>
    <property type="match status" value="1"/>
</dbReference>
<feature type="initiator methionine" description="Removed" evidence="20 21">
    <location>
        <position position="1"/>
    </location>
</feature>
<feature type="chain" id="PRO_0000085958" description="Cyclin-G-associated kinase">
    <location>
        <begin position="2"/>
        <end position="1311"/>
    </location>
</feature>
<feature type="domain" description="Protein kinase" evidence="3">
    <location>
        <begin position="40"/>
        <end position="314"/>
    </location>
</feature>
<feature type="domain" description="Phosphatase tensin-type" evidence="6">
    <location>
        <begin position="399"/>
        <end position="566"/>
    </location>
</feature>
<feature type="domain" description="C2 tensin-type" evidence="5">
    <location>
        <begin position="572"/>
        <end position="710"/>
    </location>
</feature>
<feature type="domain" description="J" evidence="4">
    <location>
        <begin position="1247"/>
        <end position="1311"/>
    </location>
</feature>
<feature type="region of interest" description="Disordered" evidence="8">
    <location>
        <begin position="709"/>
        <end position="729"/>
    </location>
</feature>
<feature type="region of interest" description="Disordered" evidence="8">
    <location>
        <begin position="749"/>
        <end position="788"/>
    </location>
</feature>
<feature type="region of interest" description="Disordered" evidence="8">
    <location>
        <begin position="801"/>
        <end position="860"/>
    </location>
</feature>
<feature type="region of interest" description="Disordered" evidence="8">
    <location>
        <begin position="913"/>
        <end position="1035"/>
    </location>
</feature>
<feature type="region of interest" description="Disordered" evidence="8">
    <location>
        <begin position="1047"/>
        <end position="1150"/>
    </location>
</feature>
<feature type="compositionally biased region" description="Low complexity" evidence="8">
    <location>
        <begin position="770"/>
        <end position="788"/>
    </location>
</feature>
<feature type="compositionally biased region" description="Low complexity" evidence="8">
    <location>
        <begin position="925"/>
        <end position="939"/>
    </location>
</feature>
<feature type="compositionally biased region" description="Low complexity" evidence="8">
    <location>
        <begin position="950"/>
        <end position="966"/>
    </location>
</feature>
<feature type="compositionally biased region" description="Polar residues" evidence="8">
    <location>
        <begin position="967"/>
        <end position="976"/>
    </location>
</feature>
<feature type="compositionally biased region" description="Polar residues" evidence="8">
    <location>
        <begin position="1070"/>
        <end position="1080"/>
    </location>
</feature>
<feature type="compositionally biased region" description="Polar residues" evidence="8">
    <location>
        <begin position="1109"/>
        <end position="1124"/>
    </location>
</feature>
<feature type="active site" description="Proton acceptor" evidence="3 7">
    <location>
        <position position="173"/>
    </location>
</feature>
<feature type="modified residue" description="N-acetylserine" evidence="20 21">
    <location>
        <position position="2"/>
    </location>
</feature>
<feature type="modified residue" description="Phosphoserine" evidence="1">
    <location>
        <position position="2"/>
    </location>
</feature>
<feature type="modified residue" description="Phosphoserine" evidence="19 20">
    <location>
        <position position="16"/>
    </location>
</feature>
<feature type="modified residue" description="Phosphoserine" evidence="19">
    <location>
        <position position="456"/>
    </location>
</feature>
<feature type="modified residue" description="Phosphoserine" evidence="19">
    <location>
        <position position="770"/>
    </location>
</feature>
<feature type="modified residue" description="Phosphothreonine" evidence="24">
    <location>
        <position position="776"/>
    </location>
</feature>
<feature type="modified residue" description="Phosphoserine" evidence="25">
    <location>
        <position position="783"/>
    </location>
</feature>
<feature type="modified residue" description="Phosphothreonine" evidence="24">
    <location>
        <position position="794"/>
    </location>
</feature>
<feature type="modified residue" description="Phosphoserine" evidence="1">
    <location>
        <position position="811"/>
    </location>
</feature>
<feature type="modified residue" description="Phosphoserine" evidence="18 19 20 22 24">
    <location>
        <position position="826"/>
    </location>
</feature>
<feature type="modified residue" description="Phosphoserine" evidence="18 19 20 22 23 24">
    <location>
        <position position="829"/>
    </location>
</feature>
<feature type="modified residue" description="Phosphoserine" evidence="18 19 20">
    <location>
        <position position="834"/>
    </location>
</feature>
<feature type="modified residue" description="Phosphoserine" evidence="20">
    <location>
        <position position="939"/>
    </location>
</feature>
<feature type="modified residue" description="Phosphoserine" evidence="19">
    <location>
        <position position="1096"/>
    </location>
</feature>
<feature type="modified residue" description="Omega-N-methylarginine" evidence="2">
    <location>
        <position position="1123"/>
    </location>
</feature>
<feature type="modified residue" description="Phosphoserine" evidence="20">
    <location>
        <position position="1176"/>
    </location>
</feature>
<feature type="modified residue" description="Phosphoserine" evidence="20">
    <location>
        <position position="1185"/>
    </location>
</feature>
<feature type="splice variant" id="VSP_054479" description="In isoform 2." evidence="13">
    <location>
        <begin position="49"/>
        <end position="127"/>
    </location>
</feature>
<feature type="sequence variant" id="VAR_040505" description="In dbSNP:rs768962219." evidence="10">
    <original>S</original>
    <variation>L</variation>
    <location>
        <position position="144"/>
    </location>
</feature>
<feature type="sequence variant" id="VAR_040506" description="In dbSNP:rs34255232." evidence="10">
    <original>V</original>
    <variation>M</variation>
    <location>
        <position position="580"/>
    </location>
</feature>
<feature type="sequence variant" id="VAR_040507" description="In dbSNP:rs34585705." evidence="10">
    <original>D</original>
    <variation>Y</variation>
    <location>
        <position position="787"/>
    </location>
</feature>
<feature type="sequence variant" id="VAR_040508" description="In dbSNP:rs149842313." evidence="10">
    <original>Q</original>
    <variation>R</variation>
    <location>
        <position position="877"/>
    </location>
</feature>
<feature type="sequence variant" id="VAR_040509" description="In a lung neuroendocrine carcinoma sample; somatic mutation; dbSNP:rs773153935." evidence="10">
    <original>G</original>
    <variation>D</variation>
    <location>
        <position position="962"/>
    </location>
</feature>
<feature type="sequence variant" id="VAR_040510" description="In dbSNP:rs35227944." evidence="10">
    <original>T</original>
    <variation>M</variation>
    <location>
        <position position="1051"/>
    </location>
</feature>
<feature type="sequence variant" id="VAR_040511" description="In dbSNP:rs55801437." evidence="10">
    <original>Q</original>
    <variation>H</variation>
    <location>
        <position position="1120"/>
    </location>
</feature>
<feature type="sequence variant" id="VAR_040512" description="In dbSNP:rs56169884." evidence="10">
    <original>P</original>
    <variation>L</variation>
    <location>
        <position position="1137"/>
    </location>
</feature>
<feature type="sequence variant" id="VAR_040513" description="In dbSNP:rs56326341." evidence="10">
    <original>S</original>
    <variation>N</variation>
    <location>
        <position position="1168"/>
    </location>
</feature>
<feature type="sequence variant" id="VAR_040514" description="In dbSNP:rs2306242." evidence="10">
    <original>K</original>
    <variation>R</variation>
    <location>
        <position position="1265"/>
    </location>
</feature>
<feature type="sequence variant" id="VAR_040515" description="In dbSNP:rs1134921." evidence="10">
    <original>D</original>
    <variation>N</variation>
    <location>
        <position position="1297"/>
    </location>
</feature>
<feature type="sequence conflict" description="In Ref. 2; AAH85005." evidence="15" ref="2">
    <original>R</original>
    <variation>C</variation>
    <location>
        <position position="607"/>
    </location>
</feature>
<feature type="sequence conflict" description="In Ref. 1; BAA22623." evidence="15" ref="1">
    <original>P</original>
    <variation>A</variation>
    <location>
        <position position="1113"/>
    </location>
</feature>
<feature type="turn" evidence="26">
    <location>
        <begin position="27"/>
        <end position="30"/>
    </location>
</feature>
<feature type="strand" evidence="26">
    <location>
        <begin position="32"/>
        <end position="35"/>
    </location>
</feature>
<feature type="strand" evidence="26">
    <location>
        <begin position="38"/>
        <end position="47"/>
    </location>
</feature>
<feature type="strand" evidence="26">
    <location>
        <begin position="50"/>
        <end position="59"/>
    </location>
</feature>
<feature type="turn" evidence="26">
    <location>
        <begin position="60"/>
        <end position="62"/>
    </location>
</feature>
<feature type="strand" evidence="26">
    <location>
        <begin position="65"/>
        <end position="75"/>
    </location>
</feature>
<feature type="helix" evidence="26">
    <location>
        <begin position="76"/>
        <end position="92"/>
    </location>
</feature>
<feature type="strand" evidence="26">
    <location>
        <begin position="101"/>
        <end position="107"/>
    </location>
</feature>
<feature type="turn" evidence="26">
    <location>
        <begin position="109"/>
        <end position="111"/>
    </location>
</feature>
<feature type="strand" evidence="26">
    <location>
        <begin position="115"/>
        <end position="124"/>
    </location>
</feature>
<feature type="strand" evidence="26">
    <location>
        <begin position="127"/>
        <end position="129"/>
    </location>
</feature>
<feature type="helix" evidence="26">
    <location>
        <begin position="130"/>
        <end position="138"/>
    </location>
</feature>
<feature type="helix" evidence="26">
    <location>
        <begin position="145"/>
        <end position="163"/>
    </location>
</feature>
<feature type="strand" evidence="26">
    <location>
        <begin position="165"/>
        <end position="167"/>
    </location>
</feature>
<feature type="helix" evidence="26">
    <location>
        <begin position="176"/>
        <end position="178"/>
    </location>
</feature>
<feature type="strand" evidence="27">
    <location>
        <begin position="179"/>
        <end position="181"/>
    </location>
</feature>
<feature type="strand" evidence="26">
    <location>
        <begin position="187"/>
        <end position="189"/>
    </location>
</feature>
<feature type="helix" evidence="28">
    <location>
        <begin position="208"/>
        <end position="219"/>
    </location>
</feature>
<feature type="helix" evidence="28">
    <location>
        <begin position="224"/>
        <end position="226"/>
    </location>
</feature>
<feature type="helix" evidence="28">
    <location>
        <begin position="229"/>
        <end position="232"/>
    </location>
</feature>
<feature type="helix" evidence="26">
    <location>
        <begin position="242"/>
        <end position="258"/>
    </location>
</feature>
<feature type="turn" evidence="28">
    <location>
        <begin position="262"/>
        <end position="265"/>
    </location>
</feature>
<feature type="helix" evidence="28">
    <location>
        <begin position="268"/>
        <end position="272"/>
    </location>
</feature>
<feature type="helix" evidence="26">
    <location>
        <begin position="286"/>
        <end position="288"/>
    </location>
</feature>
<feature type="helix" evidence="26">
    <location>
        <begin position="289"/>
        <end position="295"/>
    </location>
</feature>
<feature type="helix" evidence="26">
    <location>
        <begin position="300"/>
        <end position="302"/>
    </location>
</feature>
<feature type="helix" evidence="26">
    <location>
        <begin position="306"/>
        <end position="319"/>
    </location>
</feature>
<feature type="helix" evidence="26">
    <location>
        <begin position="329"/>
        <end position="332"/>
    </location>
</feature>
<organism>
    <name type="scientific">Homo sapiens</name>
    <name type="common">Human</name>
    <dbReference type="NCBI Taxonomy" id="9606"/>
    <lineage>
        <taxon>Eukaryota</taxon>
        <taxon>Metazoa</taxon>
        <taxon>Chordata</taxon>
        <taxon>Craniata</taxon>
        <taxon>Vertebrata</taxon>
        <taxon>Euteleostomi</taxon>
        <taxon>Mammalia</taxon>
        <taxon>Eutheria</taxon>
        <taxon>Euarchontoglires</taxon>
        <taxon>Primates</taxon>
        <taxon>Haplorrhini</taxon>
        <taxon>Catarrhini</taxon>
        <taxon>Hominidae</taxon>
        <taxon>Homo</taxon>
    </lineage>
</organism>
<protein>
    <recommendedName>
        <fullName evidence="15">Cyclin-G-associated kinase</fullName>
        <ecNumber>2.7.11.1</ecNumber>
    </recommendedName>
    <alternativeName>
        <fullName evidence="14">DnaJ homolog subfamily C member 26</fullName>
    </alternativeName>
</protein>
<proteinExistence type="evidence at protein level"/>
<name>GAK_HUMAN</name>
<keyword id="KW-0002">3D-structure</keyword>
<keyword id="KW-0007">Acetylation</keyword>
<keyword id="KW-0025">Alternative splicing</keyword>
<keyword id="KW-0067">ATP-binding</keyword>
<keyword id="KW-0131">Cell cycle</keyword>
<keyword id="KW-0965">Cell junction</keyword>
<keyword id="KW-0963">Cytoplasm</keyword>
<keyword id="KW-0968">Cytoplasmic vesicle</keyword>
<keyword id="KW-0333">Golgi apparatus</keyword>
<keyword id="KW-0418">Kinase</keyword>
<keyword id="KW-0488">Methylation</keyword>
<keyword id="KW-0547">Nucleotide-binding</keyword>
<keyword id="KW-0597">Phosphoprotein</keyword>
<keyword id="KW-1267">Proteomics identification</keyword>
<keyword id="KW-1185">Reference proteome</keyword>
<keyword id="KW-0723">Serine/threonine-protein kinase</keyword>
<keyword id="KW-0808">Transferase</keyword>
<reference key="1">
    <citation type="journal article" date="1997" name="Genomics">
        <title>Structure, expression, and chromosomal localization of human GAK.</title>
        <authorList>
            <person name="Kimura S.H."/>
            <person name="Tsuruga H."/>
            <person name="Yabuta N."/>
            <person name="Endo Y."/>
            <person name="Nojima H."/>
        </authorList>
    </citation>
    <scope>NUCLEOTIDE SEQUENCE [MRNA] (ISOFORM 1)</scope>
    <scope>CHARACTERIZATION</scope>
    <source>
        <tissue>Fibroblast</tissue>
    </source>
</reference>
<reference key="2">
    <citation type="journal article" date="2004" name="Genome Res.">
        <title>The status, quality, and expansion of the NIH full-length cDNA project: the Mammalian Gene Collection (MGC).</title>
        <authorList>
            <consortium name="The MGC Project Team"/>
        </authorList>
    </citation>
    <scope>NUCLEOTIDE SEQUENCE [LARGE SCALE MRNA] (ISOFORM 2)</scope>
    <scope>NUCLEOTIDE SEQUENCE [LARGE SCALE MRNA] OF 981-1311 (ISOFORM 1)</scope>
    <source>
        <tissue>Ovary</tissue>
        <tissue>Placenta</tissue>
    </source>
</reference>
<reference key="3">
    <citation type="journal article" date="2000" name="J. Biol. Chem.">
        <title>Role of cyclin G-associated kinase in uncoating clathrin-coated vesicles from non-neuronal cells.</title>
        <authorList>
            <person name="Greener T."/>
            <person name="Zhao X."/>
            <person name="Nojima H."/>
            <person name="Eisenberg E."/>
            <person name="Greene L.E."/>
        </authorList>
    </citation>
    <scope>FUNCTION</scope>
    <scope>SUBCELLULAR LOCATION</scope>
</reference>
<reference key="4">
    <citation type="journal article" date="2008" name="Mol. Cell">
        <title>Kinase-selective enrichment enables quantitative phosphoproteomics of the kinome across the cell cycle.</title>
        <authorList>
            <person name="Daub H."/>
            <person name="Olsen J.V."/>
            <person name="Bairlein M."/>
            <person name="Gnad F."/>
            <person name="Oppermann F.S."/>
            <person name="Korner R."/>
            <person name="Greff Z."/>
            <person name="Keri G."/>
            <person name="Stemmann O."/>
            <person name="Mann M."/>
        </authorList>
    </citation>
    <scope>PHOSPHORYLATION [LARGE SCALE ANALYSIS] AT SER-16; SER-456; SER-770; SER-826; SER-829; SER-834 AND SER-1096</scope>
    <scope>IDENTIFICATION BY MASS SPECTROMETRY [LARGE SCALE ANALYSIS]</scope>
    <source>
        <tissue>Cervix carcinoma</tissue>
    </source>
</reference>
<reference key="5">
    <citation type="journal article" date="2008" name="Proc. Natl. Acad. Sci. U.S.A.">
        <title>A quantitative atlas of mitotic phosphorylation.</title>
        <authorList>
            <person name="Dephoure N."/>
            <person name="Zhou C."/>
            <person name="Villen J."/>
            <person name="Beausoleil S.A."/>
            <person name="Bakalarski C.E."/>
            <person name="Elledge S.J."/>
            <person name="Gygi S.P."/>
        </authorList>
    </citation>
    <scope>PHOSPHORYLATION [LARGE SCALE ANALYSIS] AT SER-826; SER-829 AND SER-834</scope>
    <scope>IDENTIFICATION BY MASS SPECTROMETRY [LARGE SCALE ANALYSIS]</scope>
    <source>
        <tissue>Cervix carcinoma</tissue>
    </source>
</reference>
<reference key="6">
    <citation type="journal article" date="2008" name="Traffic">
        <title>Auxilin depletion causes self-assembly of clathrin into membraneless cages in vivo.</title>
        <authorList>
            <person name="Hirst J."/>
            <person name="Sahlender D.A."/>
            <person name="Li S."/>
            <person name="Lubben N.B."/>
            <person name="Borner G.H."/>
            <person name="Robinson M.S."/>
        </authorList>
    </citation>
    <scope>FUNCTION</scope>
</reference>
<reference key="7">
    <citation type="journal article" date="2009" name="Anal. Chem.">
        <title>Lys-N and trypsin cover complementary parts of the phosphoproteome in a refined SCX-based approach.</title>
        <authorList>
            <person name="Gauci S."/>
            <person name="Helbig A.O."/>
            <person name="Slijper M."/>
            <person name="Krijgsveld J."/>
            <person name="Heck A.J."/>
            <person name="Mohammed S."/>
        </authorList>
    </citation>
    <scope>ACETYLATION [LARGE SCALE ANALYSIS] AT SER-2</scope>
    <scope>CLEAVAGE OF INITIATOR METHIONINE [LARGE SCALE ANALYSIS]</scope>
    <scope>IDENTIFICATION BY MASS SPECTROMETRY [LARGE SCALE ANALYSIS]</scope>
</reference>
<reference key="8">
    <citation type="journal article" date="2009" name="Cell Stress Chaperones">
        <title>Guidelines for the nomenclature of the human heat shock proteins.</title>
        <authorList>
            <person name="Kampinga H.H."/>
            <person name="Hageman J."/>
            <person name="Vos M.J."/>
            <person name="Kubota H."/>
            <person name="Tanguay R.M."/>
            <person name="Bruford E.A."/>
            <person name="Cheetham M.E."/>
            <person name="Chen B."/>
            <person name="Hightower L.E."/>
        </authorList>
    </citation>
    <scope>NOMENCLATURE</scope>
</reference>
<reference key="9">
    <citation type="journal article" date="2009" name="Mol. Cell. Proteomics">
        <title>Large-scale proteomics analysis of the human kinome.</title>
        <authorList>
            <person name="Oppermann F.S."/>
            <person name="Gnad F."/>
            <person name="Olsen J.V."/>
            <person name="Hornberger R."/>
            <person name="Greff Z."/>
            <person name="Keri G."/>
            <person name="Mann M."/>
            <person name="Daub H."/>
        </authorList>
    </citation>
    <scope>ACETYLATION [LARGE SCALE ANALYSIS] AT SER-2</scope>
    <scope>PHOSPHORYLATION [LARGE SCALE ANALYSIS] AT SER-16; SER-826; SER-829; SER-834; SER-939; SER-1176 AND SER-1185</scope>
    <scope>CLEAVAGE OF INITIATOR METHIONINE [LARGE SCALE ANALYSIS]</scope>
    <scope>IDENTIFICATION BY MASS SPECTROMETRY [LARGE SCALE ANALYSIS]</scope>
</reference>
<reference key="10">
    <citation type="journal article" date="2009" name="Sci. Signal.">
        <title>Quantitative phosphoproteomic analysis of T cell receptor signaling reveals system-wide modulation of protein-protein interactions.</title>
        <authorList>
            <person name="Mayya V."/>
            <person name="Lundgren D.H."/>
            <person name="Hwang S.-I."/>
            <person name="Rezaul K."/>
            <person name="Wu L."/>
            <person name="Eng J.K."/>
            <person name="Rodionov V."/>
            <person name="Han D.K."/>
        </authorList>
    </citation>
    <scope>PHOSPHORYLATION [LARGE SCALE ANALYSIS] AT SER-826 AND SER-829</scope>
    <scope>IDENTIFICATION BY MASS SPECTROMETRY [LARGE SCALE ANALYSIS]</scope>
    <source>
        <tissue>Leukemic T-cell</tissue>
    </source>
</reference>
<reference key="11">
    <citation type="journal article" date="2011" name="BMC Syst. Biol.">
        <title>Initial characterization of the human central proteome.</title>
        <authorList>
            <person name="Burkard T.R."/>
            <person name="Planyavsky M."/>
            <person name="Kaupe I."/>
            <person name="Breitwieser F.P."/>
            <person name="Buerckstuemmer T."/>
            <person name="Bennett K.L."/>
            <person name="Superti-Furga G."/>
            <person name="Colinge J."/>
        </authorList>
    </citation>
    <scope>IDENTIFICATION BY MASS SPECTROMETRY [LARGE SCALE ANALYSIS]</scope>
</reference>
<reference key="12">
    <citation type="journal article" date="2011" name="Sci. Signal.">
        <title>System-wide temporal characterization of the proteome and phosphoproteome of human embryonic stem cell differentiation.</title>
        <authorList>
            <person name="Rigbolt K.T."/>
            <person name="Prokhorova T.A."/>
            <person name="Akimov V."/>
            <person name="Henningsen J."/>
            <person name="Johansen P.T."/>
            <person name="Kratchmarova I."/>
            <person name="Kassem M."/>
            <person name="Mann M."/>
            <person name="Olsen J.V."/>
            <person name="Blagoev B."/>
        </authorList>
    </citation>
    <scope>PHOSPHORYLATION [LARGE SCALE ANALYSIS] AT SER-829</scope>
    <scope>IDENTIFICATION BY MASS SPECTROMETRY [LARGE SCALE ANALYSIS]</scope>
</reference>
<reference key="13">
    <citation type="journal article" date="2013" name="J. Proteome Res.">
        <title>Toward a comprehensive characterization of a human cancer cell phosphoproteome.</title>
        <authorList>
            <person name="Zhou H."/>
            <person name="Di Palma S."/>
            <person name="Preisinger C."/>
            <person name="Peng M."/>
            <person name="Polat A.N."/>
            <person name="Heck A.J."/>
            <person name="Mohammed S."/>
        </authorList>
    </citation>
    <scope>PHOSPHORYLATION [LARGE SCALE ANALYSIS] AT THR-776; THR-794; SER-826 AND SER-829</scope>
    <scope>IDENTIFICATION BY MASS SPECTROMETRY [LARGE SCALE ANALYSIS]</scope>
    <source>
        <tissue>Erythroleukemia</tissue>
    </source>
</reference>
<reference key="14">
    <citation type="journal article" date="2014" name="J. Proteomics">
        <title>An enzyme assisted RP-RPLC approach for in-depth analysis of human liver phosphoproteome.</title>
        <authorList>
            <person name="Bian Y."/>
            <person name="Song C."/>
            <person name="Cheng K."/>
            <person name="Dong M."/>
            <person name="Wang F."/>
            <person name="Huang J."/>
            <person name="Sun D."/>
            <person name="Wang L."/>
            <person name="Ye M."/>
            <person name="Zou H."/>
        </authorList>
    </citation>
    <scope>PHOSPHORYLATION [LARGE SCALE ANALYSIS] AT SER-783</scope>
    <scope>IDENTIFICATION BY MASS SPECTROMETRY [LARGE SCALE ANALYSIS]</scope>
    <source>
        <tissue>Liver</tissue>
    </source>
</reference>
<reference key="15">
    <citation type="journal article" date="2020" name="J. Cell Biol.">
        <title>Dynamics of Auxilin 1 and GAK in clathrin-mediated traffic.</title>
        <authorList>
            <person name="He K."/>
            <person name="Song E."/>
            <person name="Upadhyayula S."/>
            <person name="Dang S."/>
            <person name="Gaudin R."/>
            <person name="Skillern W."/>
            <person name="Bu K."/>
            <person name="Capraro B.R."/>
            <person name="Rapoport I."/>
            <person name="Kusters I."/>
            <person name="Ma M."/>
            <person name="Kirchhausen T."/>
        </authorList>
    </citation>
    <scope>SUBCELLULAR LOCATION</scope>
</reference>
<reference key="16">
    <citation type="submission" date="2011-07" db="PDB data bank">
        <title>Crystal structure of the human cyclin G associated kinase (GAK).</title>
        <authorList>
            <consortium name="Midwest center for structural genomics (MCSG)"/>
        </authorList>
    </citation>
    <scope>X-RAY CRYSTALLOGRAPHY (2.1 ANGSTROMS) OF 12-347</scope>
</reference>
<reference key="17">
    <citation type="journal article" date="2007" name="Nature">
        <title>Patterns of somatic mutation in human cancer genomes.</title>
        <authorList>
            <person name="Greenman C."/>
            <person name="Stephens P."/>
            <person name="Smith R."/>
            <person name="Dalgliesh G.L."/>
            <person name="Hunter C."/>
            <person name="Bignell G."/>
            <person name="Davies H."/>
            <person name="Teague J."/>
            <person name="Butler A."/>
            <person name="Stevens C."/>
            <person name="Edkins S."/>
            <person name="O'Meara S."/>
            <person name="Vastrik I."/>
            <person name="Schmidt E.E."/>
            <person name="Avis T."/>
            <person name="Barthorpe S."/>
            <person name="Bhamra G."/>
            <person name="Buck G."/>
            <person name="Choudhury B."/>
            <person name="Clements J."/>
            <person name="Cole J."/>
            <person name="Dicks E."/>
            <person name="Forbes S."/>
            <person name="Gray K."/>
            <person name="Halliday K."/>
            <person name="Harrison R."/>
            <person name="Hills K."/>
            <person name="Hinton J."/>
            <person name="Jenkinson A."/>
            <person name="Jones D."/>
            <person name="Menzies A."/>
            <person name="Mironenko T."/>
            <person name="Perry J."/>
            <person name="Raine K."/>
            <person name="Richardson D."/>
            <person name="Shepherd R."/>
            <person name="Small A."/>
            <person name="Tofts C."/>
            <person name="Varian J."/>
            <person name="Webb T."/>
            <person name="West S."/>
            <person name="Widaa S."/>
            <person name="Yates A."/>
            <person name="Cahill D.P."/>
            <person name="Louis D.N."/>
            <person name="Goldstraw P."/>
            <person name="Nicholson A.G."/>
            <person name="Brasseur F."/>
            <person name="Looijenga L."/>
            <person name="Weber B.L."/>
            <person name="Chiew Y.-E."/>
            <person name="DeFazio A."/>
            <person name="Greaves M.F."/>
            <person name="Green A.R."/>
            <person name="Campbell P."/>
            <person name="Birney E."/>
            <person name="Easton D.F."/>
            <person name="Chenevix-Trench G."/>
            <person name="Tan M.-H."/>
            <person name="Khoo S.K."/>
            <person name="Teh B.T."/>
            <person name="Yuen S.T."/>
            <person name="Leung S.Y."/>
            <person name="Wooster R."/>
            <person name="Futreal P.A."/>
            <person name="Stratton M.R."/>
        </authorList>
    </citation>
    <scope>VARIANTS [LARGE SCALE ANALYSIS] LEU-144; MET-580; TYR-787; ARG-877; ASP-962; MET-1051; HIS-1120; LEU-1137; ASN-1168; ARG-1265 AND ASN-1297</scope>
</reference>
<comment type="function">
    <text evidence="9 11">Associates with cyclin G and CDK5. Seems to act as an auxilin homolog that is involved in the uncoating of clathrin-coated vesicles by Hsc70 in non-neuronal cells. Expression oscillates slightly during the cell cycle, peaking at G1 (PubMed:10625686). May play a role in clathrin-mediated endocytosis and intracellular trafficking, and in the dynamics of clathrin assembly/disassembly (PubMed:18489706).</text>
</comment>
<comment type="catalytic activity">
    <reaction>
        <text>L-seryl-[protein] + ATP = O-phospho-L-seryl-[protein] + ADP + H(+)</text>
        <dbReference type="Rhea" id="RHEA:17989"/>
        <dbReference type="Rhea" id="RHEA-COMP:9863"/>
        <dbReference type="Rhea" id="RHEA-COMP:11604"/>
        <dbReference type="ChEBI" id="CHEBI:15378"/>
        <dbReference type="ChEBI" id="CHEBI:29999"/>
        <dbReference type="ChEBI" id="CHEBI:30616"/>
        <dbReference type="ChEBI" id="CHEBI:83421"/>
        <dbReference type="ChEBI" id="CHEBI:456216"/>
        <dbReference type="EC" id="2.7.11.1"/>
    </reaction>
</comment>
<comment type="catalytic activity">
    <reaction>
        <text>L-threonyl-[protein] + ATP = O-phospho-L-threonyl-[protein] + ADP + H(+)</text>
        <dbReference type="Rhea" id="RHEA:46608"/>
        <dbReference type="Rhea" id="RHEA-COMP:11060"/>
        <dbReference type="Rhea" id="RHEA-COMP:11605"/>
        <dbReference type="ChEBI" id="CHEBI:15378"/>
        <dbReference type="ChEBI" id="CHEBI:30013"/>
        <dbReference type="ChEBI" id="CHEBI:30616"/>
        <dbReference type="ChEBI" id="CHEBI:61977"/>
        <dbReference type="ChEBI" id="CHEBI:456216"/>
        <dbReference type="EC" id="2.7.11.1"/>
    </reaction>
</comment>
<comment type="interaction">
    <interactant intactId="EBI-714707">
        <id>O14976</id>
    </interactant>
    <interactant intactId="EBI-6308763">
        <id>Q9NQ11</id>
        <label>ATP13A2</label>
    </interactant>
    <organismsDiffer>false</organismsDiffer>
    <experiments>2</experiments>
</comment>
<comment type="interaction">
    <interactant intactId="EBI-714707">
        <id>O14976</id>
    </interactant>
    <interactant intactId="EBI-351896">
        <id>P11142</id>
        <label>HSPA8</label>
    </interactant>
    <organismsDiffer>false</organismsDiffer>
    <experiments>9</experiments>
</comment>
<comment type="interaction">
    <interactant intactId="EBI-714707">
        <id>O14976</id>
    </interactant>
    <interactant intactId="EBI-5323863">
        <id>Q5S007</id>
        <label>LRRK2</label>
    </interactant>
    <organismsDiffer>false</organismsDiffer>
    <experiments>11</experiments>
</comment>
<comment type="subcellular location">
    <subcellularLocation>
        <location evidence="9">Cytoplasm</location>
        <location evidence="9">Perinuclear region</location>
    </subcellularLocation>
    <subcellularLocation>
        <location evidence="9">Golgi apparatus</location>
        <location evidence="9">trans-Golgi network</location>
    </subcellularLocation>
    <subcellularLocation>
        <location evidence="16">Cell junction</location>
        <location evidence="16">Focal adhesion</location>
    </subcellularLocation>
    <subcellularLocation>
        <location evidence="12">Cytoplasmic vesicle</location>
        <location evidence="12">Clathrin-coated vesicle</location>
    </subcellularLocation>
    <text evidence="12">Localizes to the perinuclear area and to the trans-Golgi network. Also seen on the plasma membrane, probably at focal adhesions. Recruitment to clathrin-coated vesicles depends on temporal variations in phosphoinositide composition of clathrin-coated vesicles (PubMed:31962345).</text>
</comment>
<comment type="alternative products">
    <event type="alternative splicing"/>
    <isoform>
        <id>O14976-1</id>
        <name>1</name>
        <sequence type="displayed"/>
    </isoform>
    <isoform>
        <id>O14976-2</id>
        <name>2</name>
        <sequence type="described" ref="VSP_054479"/>
    </isoform>
</comment>
<comment type="tissue specificity">
    <text>Ubiquitous. Highest in testis.</text>
</comment>
<comment type="similarity">
    <text evidence="3">Belongs to the protein kinase superfamily. Ser/Thr protein kinase family.</text>
</comment>
<sequence length="1311" mass="143191">MSLLQSALDFLAGPGSLGGASGRDQSDFVGQTVELGELRLRVRRVLAEGGFAFVYEAQDVGSGREYALKRLLSNEEEKNRAIIQEVCFMKKLSGHPNIVQFCSAASIGKEESDTGQAEFLLLTELCKGQLVEFLKKMESRGPLSCDTVLKIFYQTCRAVQHMHRQKPPIIHRDLKVENLLLSNQGTIKLCDFGSATTISHYPDYSWSAQRRALVEEEITRNTTPMYRTPEIIDLYSNFPIGEKQDIWALGCILYLLCFRQHPFEDGAKLRIVNGKYSIPPHDTQYTVFHSLIRAMLQVNPEERLSIAEVVHQLQEIAAARNVNPKSPITELLEQNGGYGSATLSRGPPPPVGPAGSGYSGGLALAEYDQPYGGFLDILRGGTERLFTNLKDTSSKVIQSVANYAKGDLDISYITSRIAVMSFPAEGVESALKNNIEDVRLFLDSKHPGHYAVYNLSPRTYRPSRFHNRVSECGWAARRAPHLHTLYNICRNMHAWLRQDHKNVCVVHCMDGRAASAVAVCSFLCFCRLFSTAEAAVYMFSMKRCPPGIWPSHKRYIEYMCDMVAEEPITPHSKPILVRAVVMTPVPLFSKQRSGCRPFCEVYVGDERVASTSQEYDKMRDFKIEDGKAVIPLGVTVQGDVLIVIYHARSTLGGRLQAKMASMKMFQIQFHTGFVPRNATTVKFAKYDLDACDIQEKYPDLFQVNLEVEVEPRDRPSREAPPWENSSMRGLNPKILFSSREEQQDILSKFGKPELPRQPGSTAQYDAGAGSPEAEPTDSDSPPSSSADASRFLHTLDWQEEKEAETGAENASSKESESALMEDRDESEVSDEGGSPISSEGQEPRADPEPPGLAAGLVQQDLVFEVETPAVLPEPVPQEDGVDLLGLHSEVGAGPAVPPQACKAPSSNTDLLSCLLGPPEAASQGPPEDLLSEDPLLLASPAPPLSVQSTPRGGPPAAADPFGPLLPSSGNNSQPCSNPDLFGEFLNSDSVTVPPSFPSAHSAPPPSCSADFLHLGDLPGEPSKMTASSSNPDLLGGWAAWTETAASAVAPTPATEGPLFSPGGQPAPCGSQASWTKSQNPDPFADLGDLSSGLQGSPAGFPPGGFIPKTATTPKGSSSWQTSRPPAQGASWPPQAKPPPKACTQPRPNYASNFSVIGAREERGVRAPSFAQKPKVSENDFEDLLSNQGFSSRSDKKGPKTIAEMRKQDLAKDTDPLKLKLLDWIEGKERNIRALLSTLHTVLWDGESRWTPVGMADLVAPEQVKKHYRRAVLAVHPDKAAGQPYEQHAKMIFMELNDAWSEFENQGSRPLF</sequence>
<evidence type="ECO:0000250" key="1">
    <source>
        <dbReference type="UniProtKB" id="P97874"/>
    </source>
</evidence>
<evidence type="ECO:0000250" key="2">
    <source>
        <dbReference type="UniProtKB" id="Q99KY4"/>
    </source>
</evidence>
<evidence type="ECO:0000255" key="3">
    <source>
        <dbReference type="PROSITE-ProRule" id="PRU00159"/>
    </source>
</evidence>
<evidence type="ECO:0000255" key="4">
    <source>
        <dbReference type="PROSITE-ProRule" id="PRU00286"/>
    </source>
</evidence>
<evidence type="ECO:0000255" key="5">
    <source>
        <dbReference type="PROSITE-ProRule" id="PRU00589"/>
    </source>
</evidence>
<evidence type="ECO:0000255" key="6">
    <source>
        <dbReference type="PROSITE-ProRule" id="PRU00590"/>
    </source>
</evidence>
<evidence type="ECO:0000255" key="7">
    <source>
        <dbReference type="PROSITE-ProRule" id="PRU10027"/>
    </source>
</evidence>
<evidence type="ECO:0000256" key="8">
    <source>
        <dbReference type="SAM" id="MobiDB-lite"/>
    </source>
</evidence>
<evidence type="ECO:0000269" key="9">
    <source>
    </source>
</evidence>
<evidence type="ECO:0000269" key="10">
    <source>
    </source>
</evidence>
<evidence type="ECO:0000269" key="11">
    <source>
    </source>
</evidence>
<evidence type="ECO:0000269" key="12">
    <source>
    </source>
</evidence>
<evidence type="ECO:0000303" key="13">
    <source>
    </source>
</evidence>
<evidence type="ECO:0000303" key="14">
    <source>
    </source>
</evidence>
<evidence type="ECO:0000305" key="15"/>
<evidence type="ECO:0000305" key="16">
    <source>
    </source>
</evidence>
<evidence type="ECO:0000312" key="17">
    <source>
        <dbReference type="HGNC" id="HGNC:4113"/>
    </source>
</evidence>
<evidence type="ECO:0007744" key="18">
    <source>
    </source>
</evidence>
<evidence type="ECO:0007744" key="19">
    <source>
    </source>
</evidence>
<evidence type="ECO:0007744" key="20">
    <source>
    </source>
</evidence>
<evidence type="ECO:0007744" key="21">
    <source>
    </source>
</evidence>
<evidence type="ECO:0007744" key="22">
    <source>
    </source>
</evidence>
<evidence type="ECO:0007744" key="23">
    <source>
    </source>
</evidence>
<evidence type="ECO:0007744" key="24">
    <source>
    </source>
</evidence>
<evidence type="ECO:0007744" key="25">
    <source>
    </source>
</evidence>
<evidence type="ECO:0007829" key="26">
    <source>
        <dbReference type="PDB" id="4O38"/>
    </source>
</evidence>
<evidence type="ECO:0007829" key="27">
    <source>
        <dbReference type="PDB" id="4Y8D"/>
    </source>
</evidence>
<evidence type="ECO:0007829" key="28">
    <source>
        <dbReference type="PDB" id="5Y80"/>
    </source>
</evidence>
<accession>O14976</accession>
<accession>Q5U4P5</accession>
<accession>Q9BVY6</accession>
<gene>
    <name evidence="17" type="primary">GAK</name>
    <name evidence="14" type="synonym">DNAJC26</name>
</gene>